<evidence type="ECO:0000255" key="1">
    <source>
        <dbReference type="HAMAP-Rule" id="MF_00090"/>
    </source>
</evidence>
<evidence type="ECO:0000256" key="2">
    <source>
        <dbReference type="SAM" id="MobiDB-lite"/>
    </source>
</evidence>
<name>PIMT_BURP0</name>
<reference key="1">
    <citation type="journal article" date="2010" name="Genome Biol. Evol.">
        <title>Continuing evolution of Burkholderia mallei through genome reduction and large-scale rearrangements.</title>
        <authorList>
            <person name="Losada L."/>
            <person name="Ronning C.M."/>
            <person name="DeShazer D."/>
            <person name="Woods D."/>
            <person name="Fedorova N."/>
            <person name="Kim H.S."/>
            <person name="Shabalina S.A."/>
            <person name="Pearson T.R."/>
            <person name="Brinkac L."/>
            <person name="Tan P."/>
            <person name="Nandi T."/>
            <person name="Crabtree J."/>
            <person name="Badger J."/>
            <person name="Beckstrom-Sternberg S."/>
            <person name="Saqib M."/>
            <person name="Schutzer S.E."/>
            <person name="Keim P."/>
            <person name="Nierman W.C."/>
        </authorList>
    </citation>
    <scope>NUCLEOTIDE SEQUENCE [LARGE SCALE GENOMIC DNA]</scope>
    <source>
        <strain>1106a</strain>
    </source>
</reference>
<gene>
    <name evidence="1" type="primary">pcm</name>
    <name type="ordered locus">BURPS1106A_2238</name>
</gene>
<dbReference type="EC" id="2.1.1.77" evidence="1"/>
<dbReference type="EMBL" id="CP000572">
    <property type="protein sequence ID" value="ABN91879.1"/>
    <property type="molecule type" value="Genomic_DNA"/>
</dbReference>
<dbReference type="RefSeq" id="WP_004531391.1">
    <property type="nucleotide sequence ID" value="NC_009076.1"/>
</dbReference>
<dbReference type="SMR" id="A3NVY1"/>
<dbReference type="KEGG" id="bpl:BURPS1106A_2238"/>
<dbReference type="HOGENOM" id="CLU_055432_1_0_4"/>
<dbReference type="Proteomes" id="UP000006738">
    <property type="component" value="Chromosome I"/>
</dbReference>
<dbReference type="GO" id="GO:0005737">
    <property type="term" value="C:cytoplasm"/>
    <property type="evidence" value="ECO:0007669"/>
    <property type="project" value="UniProtKB-SubCell"/>
</dbReference>
<dbReference type="GO" id="GO:0004719">
    <property type="term" value="F:protein-L-isoaspartate (D-aspartate) O-methyltransferase activity"/>
    <property type="evidence" value="ECO:0007669"/>
    <property type="project" value="UniProtKB-UniRule"/>
</dbReference>
<dbReference type="GO" id="GO:0032259">
    <property type="term" value="P:methylation"/>
    <property type="evidence" value="ECO:0007669"/>
    <property type="project" value="UniProtKB-KW"/>
</dbReference>
<dbReference type="GO" id="GO:0036211">
    <property type="term" value="P:protein modification process"/>
    <property type="evidence" value="ECO:0007669"/>
    <property type="project" value="UniProtKB-UniRule"/>
</dbReference>
<dbReference type="GO" id="GO:0030091">
    <property type="term" value="P:protein repair"/>
    <property type="evidence" value="ECO:0007669"/>
    <property type="project" value="UniProtKB-UniRule"/>
</dbReference>
<dbReference type="CDD" id="cd02440">
    <property type="entry name" value="AdoMet_MTases"/>
    <property type="match status" value="1"/>
</dbReference>
<dbReference type="FunFam" id="3.40.50.150:FF:000010">
    <property type="entry name" value="Protein-L-isoaspartate O-methyltransferase"/>
    <property type="match status" value="1"/>
</dbReference>
<dbReference type="Gene3D" id="3.40.50.150">
    <property type="entry name" value="Vaccinia Virus protein VP39"/>
    <property type="match status" value="1"/>
</dbReference>
<dbReference type="HAMAP" id="MF_00090">
    <property type="entry name" value="PIMT"/>
    <property type="match status" value="1"/>
</dbReference>
<dbReference type="InterPro" id="IPR000682">
    <property type="entry name" value="PCMT"/>
</dbReference>
<dbReference type="InterPro" id="IPR029063">
    <property type="entry name" value="SAM-dependent_MTases_sf"/>
</dbReference>
<dbReference type="NCBIfam" id="TIGR00080">
    <property type="entry name" value="pimt"/>
    <property type="match status" value="1"/>
</dbReference>
<dbReference type="NCBIfam" id="NF001453">
    <property type="entry name" value="PRK00312.1"/>
    <property type="match status" value="1"/>
</dbReference>
<dbReference type="PANTHER" id="PTHR11579">
    <property type="entry name" value="PROTEIN-L-ISOASPARTATE O-METHYLTRANSFERASE"/>
    <property type="match status" value="1"/>
</dbReference>
<dbReference type="PANTHER" id="PTHR11579:SF0">
    <property type="entry name" value="PROTEIN-L-ISOASPARTATE(D-ASPARTATE) O-METHYLTRANSFERASE"/>
    <property type="match status" value="1"/>
</dbReference>
<dbReference type="Pfam" id="PF01135">
    <property type="entry name" value="PCMT"/>
    <property type="match status" value="1"/>
</dbReference>
<dbReference type="SUPFAM" id="SSF53335">
    <property type="entry name" value="S-adenosyl-L-methionine-dependent methyltransferases"/>
    <property type="match status" value="1"/>
</dbReference>
<dbReference type="PROSITE" id="PS01279">
    <property type="entry name" value="PCMT"/>
    <property type="match status" value="1"/>
</dbReference>
<organism>
    <name type="scientific">Burkholderia pseudomallei (strain 1106a)</name>
    <dbReference type="NCBI Taxonomy" id="357348"/>
    <lineage>
        <taxon>Bacteria</taxon>
        <taxon>Pseudomonadati</taxon>
        <taxon>Pseudomonadota</taxon>
        <taxon>Betaproteobacteria</taxon>
        <taxon>Burkholderiales</taxon>
        <taxon>Burkholderiaceae</taxon>
        <taxon>Burkholderia</taxon>
        <taxon>pseudomallei group</taxon>
    </lineage>
</organism>
<accession>A3NVY1</accession>
<protein>
    <recommendedName>
        <fullName evidence="1">Protein-L-isoaspartate O-methyltransferase</fullName>
        <ecNumber evidence="1">2.1.1.77</ecNumber>
    </recommendedName>
    <alternativeName>
        <fullName evidence="1">L-isoaspartyl protein carboxyl methyltransferase</fullName>
    </alternativeName>
    <alternativeName>
        <fullName evidence="1">Protein L-isoaspartyl methyltransferase</fullName>
    </alternativeName>
    <alternativeName>
        <fullName evidence="1">Protein-beta-aspartate methyltransferase</fullName>
        <shortName evidence="1">PIMT</shortName>
    </alternativeName>
</protein>
<keyword id="KW-0963">Cytoplasm</keyword>
<keyword id="KW-0489">Methyltransferase</keyword>
<keyword id="KW-0949">S-adenosyl-L-methionine</keyword>
<keyword id="KW-0808">Transferase</keyword>
<sequence>MSGERAKRFPLALEDLKREPRKPEGRVAERQAAGDAARQRLTAAAAVPAAASPIVPERRAPHGGVFAAKPARAKQHAPAAPGAAKRAPQGGAKQGDRSAAPNVALSGALALTSERVRERMVERLRANGVADPRVLAAMSAVPRHMFVDPGLAAQAYEDAALPIGHQQTISKPSVVARMIELAAAGRALERVLEIGTGCGYQAAVLSRVARDVYSIERVKPLYERAKLNLRPLRVPNIRLHYGDGRVGLPAAAPFDAIVIAAAGLDVPRALLEQLAIGGRLVAPVGEQAGEQVLTLVERVAPAQWRESRLDRVFFVPLKSGVI</sequence>
<feature type="chain" id="PRO_0000351835" description="Protein-L-isoaspartate O-methyltransferase">
    <location>
        <begin position="1"/>
        <end position="322"/>
    </location>
</feature>
<feature type="region of interest" description="Disordered" evidence="2">
    <location>
        <begin position="1"/>
        <end position="101"/>
    </location>
</feature>
<feature type="compositionally biased region" description="Basic and acidic residues" evidence="2">
    <location>
        <begin position="14"/>
        <end position="29"/>
    </location>
</feature>
<feature type="compositionally biased region" description="Low complexity" evidence="2">
    <location>
        <begin position="33"/>
        <end position="51"/>
    </location>
</feature>
<feature type="compositionally biased region" description="Low complexity" evidence="2">
    <location>
        <begin position="76"/>
        <end position="91"/>
    </location>
</feature>
<feature type="active site" evidence="1">
    <location>
        <position position="170"/>
    </location>
</feature>
<comment type="function">
    <text evidence="1">Catalyzes the methyl esterification of L-isoaspartyl residues in peptides and proteins that result from spontaneous decomposition of normal L-aspartyl and L-asparaginyl residues. It plays a role in the repair and/or degradation of damaged proteins.</text>
</comment>
<comment type="catalytic activity">
    <reaction evidence="1">
        <text>[protein]-L-isoaspartate + S-adenosyl-L-methionine = [protein]-L-isoaspartate alpha-methyl ester + S-adenosyl-L-homocysteine</text>
        <dbReference type="Rhea" id="RHEA:12705"/>
        <dbReference type="Rhea" id="RHEA-COMP:12143"/>
        <dbReference type="Rhea" id="RHEA-COMP:12144"/>
        <dbReference type="ChEBI" id="CHEBI:57856"/>
        <dbReference type="ChEBI" id="CHEBI:59789"/>
        <dbReference type="ChEBI" id="CHEBI:90596"/>
        <dbReference type="ChEBI" id="CHEBI:90598"/>
        <dbReference type="EC" id="2.1.1.77"/>
    </reaction>
</comment>
<comment type="subcellular location">
    <subcellularLocation>
        <location evidence="1">Cytoplasm</location>
    </subcellularLocation>
</comment>
<comment type="similarity">
    <text evidence="1">Belongs to the methyltransferase superfamily. L-isoaspartyl/D-aspartyl protein methyltransferase family.</text>
</comment>
<proteinExistence type="inferred from homology"/>